<protein>
    <recommendedName>
        <fullName evidence="2">Eukaryotic translation initiation factor 3 subunit D</fullName>
        <shortName evidence="2">eIF3d</shortName>
    </recommendedName>
    <alternativeName>
        <fullName evidence="2">Eukaryotic translation initiation factor 3 subunit 7</fullName>
    </alternativeName>
</protein>
<gene>
    <name type="primary">eif3d</name>
    <name type="synonym">eif3s7</name>
</gene>
<proteinExistence type="evidence at transcript level"/>
<accession>Q7ZTM9</accession>
<reference key="1">
    <citation type="submission" date="2003-01" db="EMBL/GenBank/DDBJ databases">
        <authorList>
            <consortium name="NIH - Xenopus Gene Collection (XGC) project"/>
        </authorList>
    </citation>
    <scope>NUCLEOTIDE SEQUENCE [LARGE SCALE MRNA]</scope>
    <source>
        <tissue>Embryo</tissue>
    </source>
</reference>
<keyword id="KW-0963">Cytoplasm</keyword>
<keyword id="KW-0396">Initiation factor</keyword>
<keyword id="KW-0648">Protein biosynthesis</keyword>
<keyword id="KW-1185">Reference proteome</keyword>
<keyword id="KW-0694">RNA-binding</keyword>
<dbReference type="EMBL" id="BC044692">
    <property type="protein sequence ID" value="AAH44692.1"/>
    <property type="molecule type" value="mRNA"/>
</dbReference>
<dbReference type="RefSeq" id="NP_001080587.1">
    <property type="nucleotide sequence ID" value="NM_001087118.2"/>
</dbReference>
<dbReference type="SMR" id="Q7ZTM9"/>
<dbReference type="BioGRID" id="98521">
    <property type="interactions" value="3"/>
</dbReference>
<dbReference type="IntAct" id="Q7ZTM9">
    <property type="interactions" value="1"/>
</dbReference>
<dbReference type="DNASU" id="380279"/>
<dbReference type="GeneID" id="380279"/>
<dbReference type="KEGG" id="xla:380279"/>
<dbReference type="AGR" id="Xenbase:XB-GENE-942859"/>
<dbReference type="CTD" id="380279"/>
<dbReference type="Xenbase" id="XB-GENE-942859">
    <property type="gene designation" value="eif3d.S"/>
</dbReference>
<dbReference type="OMA" id="FMDKRDN"/>
<dbReference type="OrthoDB" id="16538at2759"/>
<dbReference type="Proteomes" id="UP000186698">
    <property type="component" value="Chromosome 4S"/>
</dbReference>
<dbReference type="Bgee" id="380279">
    <property type="expression patterns" value="Expressed in spleen and 19 other cell types or tissues"/>
</dbReference>
<dbReference type="GO" id="GO:0016282">
    <property type="term" value="C:eukaryotic 43S preinitiation complex"/>
    <property type="evidence" value="ECO:0007669"/>
    <property type="project" value="UniProtKB-UniRule"/>
</dbReference>
<dbReference type="GO" id="GO:0033290">
    <property type="term" value="C:eukaryotic 48S preinitiation complex"/>
    <property type="evidence" value="ECO:0007669"/>
    <property type="project" value="UniProtKB-UniRule"/>
</dbReference>
<dbReference type="GO" id="GO:0005852">
    <property type="term" value="C:eukaryotic translation initiation factor 3 complex"/>
    <property type="evidence" value="ECO:0000250"/>
    <property type="project" value="UniProtKB"/>
</dbReference>
<dbReference type="GO" id="GO:0098808">
    <property type="term" value="F:mRNA cap binding"/>
    <property type="evidence" value="ECO:0000250"/>
    <property type="project" value="UniProtKB"/>
</dbReference>
<dbReference type="GO" id="GO:0003723">
    <property type="term" value="F:RNA binding"/>
    <property type="evidence" value="ECO:0000250"/>
    <property type="project" value="UniProtKB"/>
</dbReference>
<dbReference type="GO" id="GO:0003743">
    <property type="term" value="F:translation initiation factor activity"/>
    <property type="evidence" value="ECO:0000318"/>
    <property type="project" value="GO_Central"/>
</dbReference>
<dbReference type="GO" id="GO:0002191">
    <property type="term" value="P:cap-dependent translational initiation"/>
    <property type="evidence" value="ECO:0000250"/>
    <property type="project" value="UniProtKB"/>
</dbReference>
<dbReference type="GO" id="GO:0001732">
    <property type="term" value="P:formation of cytoplasmic translation initiation complex"/>
    <property type="evidence" value="ECO:0007669"/>
    <property type="project" value="UniProtKB-UniRule"/>
</dbReference>
<dbReference type="GO" id="GO:0006413">
    <property type="term" value="P:translational initiation"/>
    <property type="evidence" value="ECO:0000250"/>
    <property type="project" value="UniProtKB"/>
</dbReference>
<dbReference type="HAMAP" id="MF_03003">
    <property type="entry name" value="eIF3d"/>
    <property type="match status" value="1"/>
</dbReference>
<dbReference type="InterPro" id="IPR007783">
    <property type="entry name" value="eIF3d"/>
</dbReference>
<dbReference type="PANTHER" id="PTHR12399">
    <property type="entry name" value="EUKARYOTIC TRANSLATION INITIATION FACTOR 3 SUBUNIT 7"/>
    <property type="match status" value="1"/>
</dbReference>
<dbReference type="PANTHER" id="PTHR12399:SF0">
    <property type="entry name" value="EUKARYOTIC TRANSLATION INITIATION FACTOR 3 SUBUNIT D"/>
    <property type="match status" value="1"/>
</dbReference>
<dbReference type="Pfam" id="PF05091">
    <property type="entry name" value="eIF-3_zeta"/>
    <property type="match status" value="1"/>
</dbReference>
<dbReference type="PIRSF" id="PIRSF016281">
    <property type="entry name" value="EIF-3_zeta"/>
    <property type="match status" value="1"/>
</dbReference>
<comment type="function">
    <text evidence="2">mRNA cap-binding component of the eukaryotic translation initiation factor 3 (eIF-3) complex, which is involved in protein synthesis of a specialized repertoire of mRNAs and, together with other initiation factors, stimulates binding of mRNA and methionyl-tRNAi to the 40S ribosome. The eIF-3 complex specifically targets and initiates translation of a subset of mRNAs involved in cell proliferation. In the eIF-3 complex, eif3d specifically recognizes and binds the 7-methylguanosine cap of a subset of mRNAs.</text>
</comment>
<comment type="subunit">
    <text evidence="2">Component of the eukaryotic translation initiation factor 3 (eIF-3) complex, which is composed of 13 subunits: eif3a, eif3b, eif3c, eif3d, eif3e, eif3f, eif3g, eif3h, eif3i, eif3j, eif3k, eif3l and eif3m.</text>
</comment>
<comment type="subcellular location">
    <subcellularLocation>
        <location evidence="2">Cytoplasm</location>
    </subcellularLocation>
</comment>
<comment type="domain">
    <text evidence="2">The RNA gate region regulates mRNA cap recognition to prevent promiscuous mRNA-binding before assembly of eif3d into the full eukaryotic translation initiation factor 3 (eIF-3) complex.</text>
</comment>
<comment type="similarity">
    <text evidence="2">Belongs to the eIF-3 subunit D family.</text>
</comment>
<organism>
    <name type="scientific">Xenopus laevis</name>
    <name type="common">African clawed frog</name>
    <dbReference type="NCBI Taxonomy" id="8355"/>
    <lineage>
        <taxon>Eukaryota</taxon>
        <taxon>Metazoa</taxon>
        <taxon>Chordata</taxon>
        <taxon>Craniata</taxon>
        <taxon>Vertebrata</taxon>
        <taxon>Euteleostomi</taxon>
        <taxon>Amphibia</taxon>
        <taxon>Batrachia</taxon>
        <taxon>Anura</taxon>
        <taxon>Pipoidea</taxon>
        <taxon>Pipidae</taxon>
        <taxon>Xenopodinae</taxon>
        <taxon>Xenopus</taxon>
        <taxon>Xenopus</taxon>
    </lineage>
</organism>
<feature type="chain" id="PRO_0000364135" description="Eukaryotic translation initiation factor 3 subunit D">
    <location>
        <begin position="1"/>
        <end position="550"/>
    </location>
</feature>
<feature type="region of interest" description="RNA gate" evidence="1">
    <location>
        <begin position="288"/>
        <end position="302"/>
    </location>
</feature>
<feature type="region of interest" description="Disordered" evidence="3">
    <location>
        <begin position="526"/>
        <end position="550"/>
    </location>
</feature>
<feature type="compositionally biased region" description="Acidic residues" evidence="3">
    <location>
        <begin position="532"/>
        <end position="550"/>
    </location>
</feature>
<evidence type="ECO:0000250" key="1">
    <source>
        <dbReference type="UniProtKB" id="K7IM66"/>
    </source>
</evidence>
<evidence type="ECO:0000255" key="2">
    <source>
        <dbReference type="HAMAP-Rule" id="MF_03003"/>
    </source>
</evidence>
<evidence type="ECO:0000256" key="3">
    <source>
        <dbReference type="SAM" id="MobiDB-lite"/>
    </source>
</evidence>
<name>EIF3D_XENLA</name>
<sequence>MAKFQAPVINDNALGWGPCAIPDQFKDMPYQPFSKGDRLGKVADWTGATYQDKRYTNKYSSQFGGGSQYAYFHDEDETSFQLVDTTKMQKTAYQRNRMRFAQRNLRRDKDRRNMLQFNMQTLPKSAKQKERDRLRLQKKFQKQFGVRQKWDQRSQAQLKPRDSSVEVRSDWEVKEEMDFPRLMKMRYMEVADPTDIECCGAVEYYDKAFDRITTRNERPLRSIKRIFHTVTTTDDPVIRKLAKTQGNVFATDAILATLMCCTRSVNSWDIVVQRVGSKIFFDKRDNSDFDLLTVSETANEPPQDEVNSLNSPRNLAMEATYINHNFSQQCLRMGKEKHTFPNPNPFIEDDVDKNEVASVAYRYRRWKLGDDIDLVVRCEHDGVMTGANGEVSFINIKTLNEWDSKYCNGVDWRQKLDSQRGAVIATELKNNSYKLARWTCCALLAGSEYLKLGYVSRYNVKDSTRHVVLGTQQFKPNEFANQINLSMENAWGILRCVVDICMKLDEGKYLILKDPNKQVIRIYSLPDGTFSSDEEEDDDDEDEEVEEEES</sequence>